<protein>
    <recommendedName>
        <fullName>Hemoglobin subunit alpha-1/2/3</fullName>
    </recommendedName>
    <alternativeName>
        <fullName>Alpha-1/2/3-globin</fullName>
    </alternativeName>
    <alternativeName>
        <fullName>Hemoglobin alpha-1/2/3 chain</fullName>
    </alternativeName>
</protein>
<accession>P19002</accession>
<feature type="chain" id="PRO_0000052681" description="Hemoglobin subunit alpha-1/2/3">
    <location>
        <begin position="1"/>
        <end position="141"/>
    </location>
</feature>
<feature type="domain" description="Globin" evidence="3">
    <location>
        <begin position="1"/>
        <end position="141"/>
    </location>
</feature>
<feature type="binding site" evidence="3">
    <location>
        <position position="58"/>
    </location>
    <ligand>
        <name>O2</name>
        <dbReference type="ChEBI" id="CHEBI:15379"/>
    </ligand>
</feature>
<feature type="binding site" description="proximal binding residue" evidence="3">
    <location>
        <position position="87"/>
    </location>
    <ligand>
        <name>heme b</name>
        <dbReference type="ChEBI" id="CHEBI:60344"/>
    </ligand>
    <ligandPart>
        <name>Fe</name>
        <dbReference type="ChEBI" id="CHEBI:18248"/>
    </ligandPart>
</feature>
<feature type="modified residue" description="Phosphoserine" evidence="2">
    <location>
        <position position="3"/>
    </location>
</feature>
<feature type="modified residue" description="N6-succinyllysine" evidence="1">
    <location>
        <position position="7"/>
    </location>
</feature>
<feature type="modified residue" description="Phosphothreonine" evidence="2">
    <location>
        <position position="8"/>
    </location>
</feature>
<feature type="modified residue" description="N6-succinyllysine" evidence="1">
    <location>
        <position position="11"/>
    </location>
</feature>
<feature type="modified residue" description="N6-acetyllysine; alternate" evidence="2">
    <location>
        <position position="16"/>
    </location>
</feature>
<feature type="modified residue" description="N6-succinyllysine; alternate" evidence="1">
    <location>
        <position position="16"/>
    </location>
</feature>
<feature type="modified residue" description="Phosphotyrosine" evidence="2">
    <location>
        <position position="24"/>
    </location>
</feature>
<feature type="modified residue" description="Phosphoserine" evidence="2">
    <location>
        <position position="35"/>
    </location>
</feature>
<feature type="modified residue" description="N6-succinyllysine" evidence="1">
    <location>
        <position position="40"/>
    </location>
</feature>
<feature type="modified residue" description="Phosphoserine" evidence="2">
    <location>
        <position position="49"/>
    </location>
</feature>
<feature type="modified residue" description="Phosphoserine" evidence="1">
    <location>
        <position position="102"/>
    </location>
</feature>
<feature type="modified residue" description="Phosphothreonine" evidence="1">
    <location>
        <position position="108"/>
    </location>
</feature>
<feature type="modified residue" description="Phosphoserine" evidence="1">
    <location>
        <position position="124"/>
    </location>
</feature>
<feature type="modified residue" description="Phosphoserine" evidence="1">
    <location>
        <position position="131"/>
    </location>
</feature>
<feature type="modified residue" description="Phosphothreonine" evidence="1">
    <location>
        <position position="134"/>
    </location>
</feature>
<feature type="modified residue" description="Phosphothreonine" evidence="1">
    <location>
        <position position="137"/>
    </location>
</feature>
<feature type="modified residue" description="Phosphoserine" evidence="1">
    <location>
        <position position="138"/>
    </location>
</feature>
<feature type="sequence variant" description="In alpha-3.">
    <original>D</original>
    <variation>G</variation>
    <location>
        <position position="71"/>
    </location>
</feature>
<feature type="sequence variant" description="In alpha-2." evidence="4">
    <original>Q</original>
    <variation>H</variation>
    <location>
        <position position="78"/>
    </location>
</feature>
<reference key="1">
    <citation type="journal article" date="1979" name="Arch. Biochem. Biophys.">
        <title>Hemoglobin alpha-chain variation in macaques: primary structures of the alpha 1 and alpha II chains from the adult hemoglobins of Malaysian Macaca nemestrina.</title>
        <authorList>
            <person name="Mahoney W.C."/>
            <person name="Nute P.E."/>
        </authorList>
    </citation>
    <scope>PROTEIN SEQUENCE</scope>
</reference>
<name>HBA_MACNE</name>
<evidence type="ECO:0000250" key="1">
    <source>
        <dbReference type="UniProtKB" id="P01942"/>
    </source>
</evidence>
<evidence type="ECO:0000250" key="2">
    <source>
        <dbReference type="UniProtKB" id="P69905"/>
    </source>
</evidence>
<evidence type="ECO:0000255" key="3">
    <source>
        <dbReference type="PROSITE-ProRule" id="PRU00238"/>
    </source>
</evidence>
<evidence type="ECO:0000269" key="4">
    <source>
    </source>
</evidence>
<sequence>VLSPADKTNVKAAWGKVGGHAGEYGAEALERMFLSFPTTKTYFPHFDLSHGSAQVKGHGKKVADALTLAVDHVDDMPQALSALSDLHAHKLRVDPVNFKLLSHCLLVTLAAHLPAEFTPAVHASLDKFLASVGTVLTSKYR</sequence>
<comment type="function">
    <text>Involved in oxygen transport from the lung to the various peripheral tissues.</text>
</comment>
<comment type="subunit">
    <text>Heterotetramer of two alpha chains and two beta chains.</text>
</comment>
<comment type="tissue specificity">
    <text>Red blood cells.</text>
</comment>
<comment type="polymorphism">
    <text evidence="4">There are 3 alleles. The sequence shown is that of alpha-1.</text>
</comment>
<comment type="similarity">
    <text evidence="3">Belongs to the globin family.</text>
</comment>
<organism>
    <name type="scientific">Macaca nemestrina</name>
    <name type="common">Pig-tailed macaque</name>
    <dbReference type="NCBI Taxonomy" id="9545"/>
    <lineage>
        <taxon>Eukaryota</taxon>
        <taxon>Metazoa</taxon>
        <taxon>Chordata</taxon>
        <taxon>Craniata</taxon>
        <taxon>Vertebrata</taxon>
        <taxon>Euteleostomi</taxon>
        <taxon>Mammalia</taxon>
        <taxon>Eutheria</taxon>
        <taxon>Euarchontoglires</taxon>
        <taxon>Primates</taxon>
        <taxon>Haplorrhini</taxon>
        <taxon>Catarrhini</taxon>
        <taxon>Cercopithecidae</taxon>
        <taxon>Cercopithecinae</taxon>
        <taxon>Macaca</taxon>
    </lineage>
</organism>
<proteinExistence type="evidence at protein level"/>
<dbReference type="PIR" id="S06514">
    <property type="entry name" value="HAMQIP"/>
</dbReference>
<dbReference type="PIR" id="S07670">
    <property type="entry name" value="HAMQ2P"/>
</dbReference>
<dbReference type="SMR" id="P19002"/>
<dbReference type="Proteomes" id="UP000233120">
    <property type="component" value="Unassembled WGS sequence"/>
</dbReference>
<dbReference type="GO" id="GO:0072562">
    <property type="term" value="C:blood microparticle"/>
    <property type="evidence" value="ECO:0007669"/>
    <property type="project" value="TreeGrafter"/>
</dbReference>
<dbReference type="GO" id="GO:0031838">
    <property type="term" value="C:haptoglobin-hemoglobin complex"/>
    <property type="evidence" value="ECO:0007669"/>
    <property type="project" value="TreeGrafter"/>
</dbReference>
<dbReference type="GO" id="GO:0005833">
    <property type="term" value="C:hemoglobin complex"/>
    <property type="evidence" value="ECO:0007669"/>
    <property type="project" value="InterPro"/>
</dbReference>
<dbReference type="GO" id="GO:0031720">
    <property type="term" value="F:haptoglobin binding"/>
    <property type="evidence" value="ECO:0007669"/>
    <property type="project" value="TreeGrafter"/>
</dbReference>
<dbReference type="GO" id="GO:0020037">
    <property type="term" value="F:heme binding"/>
    <property type="evidence" value="ECO:0007669"/>
    <property type="project" value="InterPro"/>
</dbReference>
<dbReference type="GO" id="GO:0005506">
    <property type="term" value="F:iron ion binding"/>
    <property type="evidence" value="ECO:0007669"/>
    <property type="project" value="InterPro"/>
</dbReference>
<dbReference type="GO" id="GO:0043177">
    <property type="term" value="F:organic acid binding"/>
    <property type="evidence" value="ECO:0007669"/>
    <property type="project" value="TreeGrafter"/>
</dbReference>
<dbReference type="GO" id="GO:0019825">
    <property type="term" value="F:oxygen binding"/>
    <property type="evidence" value="ECO:0007669"/>
    <property type="project" value="InterPro"/>
</dbReference>
<dbReference type="GO" id="GO:0005344">
    <property type="term" value="F:oxygen carrier activity"/>
    <property type="evidence" value="ECO:0007669"/>
    <property type="project" value="UniProtKB-KW"/>
</dbReference>
<dbReference type="GO" id="GO:0004601">
    <property type="term" value="F:peroxidase activity"/>
    <property type="evidence" value="ECO:0007669"/>
    <property type="project" value="TreeGrafter"/>
</dbReference>
<dbReference type="GO" id="GO:0042744">
    <property type="term" value="P:hydrogen peroxide catabolic process"/>
    <property type="evidence" value="ECO:0007669"/>
    <property type="project" value="TreeGrafter"/>
</dbReference>
<dbReference type="CDD" id="cd08927">
    <property type="entry name" value="Hb-alpha-like"/>
    <property type="match status" value="1"/>
</dbReference>
<dbReference type="FunFam" id="1.10.490.10:FF:000002">
    <property type="entry name" value="Hemoglobin subunit alpha"/>
    <property type="match status" value="1"/>
</dbReference>
<dbReference type="Gene3D" id="1.10.490.10">
    <property type="entry name" value="Globins"/>
    <property type="match status" value="1"/>
</dbReference>
<dbReference type="InterPro" id="IPR000971">
    <property type="entry name" value="Globin"/>
</dbReference>
<dbReference type="InterPro" id="IPR009050">
    <property type="entry name" value="Globin-like_sf"/>
</dbReference>
<dbReference type="InterPro" id="IPR012292">
    <property type="entry name" value="Globin/Proto"/>
</dbReference>
<dbReference type="InterPro" id="IPR002338">
    <property type="entry name" value="Hemoglobin_a-typ"/>
</dbReference>
<dbReference type="InterPro" id="IPR050056">
    <property type="entry name" value="Hemoglobin_oxygen_transport"/>
</dbReference>
<dbReference type="InterPro" id="IPR002339">
    <property type="entry name" value="Hemoglobin_pi"/>
</dbReference>
<dbReference type="PANTHER" id="PTHR11442">
    <property type="entry name" value="HEMOGLOBIN FAMILY MEMBER"/>
    <property type="match status" value="1"/>
</dbReference>
<dbReference type="PANTHER" id="PTHR11442:SF48">
    <property type="entry name" value="HEMOGLOBIN SUBUNIT ALPHA"/>
    <property type="match status" value="1"/>
</dbReference>
<dbReference type="Pfam" id="PF00042">
    <property type="entry name" value="Globin"/>
    <property type="match status" value="1"/>
</dbReference>
<dbReference type="PRINTS" id="PR00612">
    <property type="entry name" value="ALPHAHAEM"/>
</dbReference>
<dbReference type="PRINTS" id="PR00815">
    <property type="entry name" value="PIHAEM"/>
</dbReference>
<dbReference type="SUPFAM" id="SSF46458">
    <property type="entry name" value="Globin-like"/>
    <property type="match status" value="1"/>
</dbReference>
<dbReference type="PROSITE" id="PS01033">
    <property type="entry name" value="GLOBIN"/>
    <property type="match status" value="1"/>
</dbReference>
<keyword id="KW-0007">Acetylation</keyword>
<keyword id="KW-0903">Direct protein sequencing</keyword>
<keyword id="KW-0349">Heme</keyword>
<keyword id="KW-0408">Iron</keyword>
<keyword id="KW-0479">Metal-binding</keyword>
<keyword id="KW-0561">Oxygen transport</keyword>
<keyword id="KW-0597">Phosphoprotein</keyword>
<keyword id="KW-1185">Reference proteome</keyword>
<keyword id="KW-0813">Transport</keyword>